<gene>
    <name type="primary">64</name>
</gene>
<dbReference type="EMBL" id="Z18946">
    <property type="protein sequence ID" value="CAA79440.1"/>
    <property type="molecule type" value="Genomic_DNA"/>
</dbReference>
<dbReference type="PIR" id="S31009">
    <property type="entry name" value="S31009"/>
</dbReference>
<dbReference type="RefSeq" id="NP_039728.1">
    <property type="nucleotide sequence ID" value="NC_001335.1"/>
</dbReference>
<dbReference type="GeneID" id="2942907"/>
<dbReference type="KEGG" id="vg:2942907"/>
<dbReference type="OrthoDB" id="19721at10239"/>
<dbReference type="Proteomes" id="UP000002123">
    <property type="component" value="Genome"/>
</dbReference>
<organism>
    <name type="scientific">Mycobacterium phage L5</name>
    <name type="common">Mycobacteriophage L5</name>
    <dbReference type="NCBI Taxonomy" id="31757"/>
    <lineage>
        <taxon>Viruses</taxon>
        <taxon>Duplodnaviria</taxon>
        <taxon>Heunggongvirae</taxon>
        <taxon>Uroviricota</taxon>
        <taxon>Caudoviricetes</taxon>
        <taxon>Fromanvirus</taxon>
    </lineage>
</organism>
<name>VG64_BPML5</name>
<feature type="chain" id="PRO_0000164802" description="Gene 64 protein">
    <location>
        <begin position="1"/>
        <end position="128"/>
    </location>
</feature>
<accession>Q05277</accession>
<keyword id="KW-1185">Reference proteome</keyword>
<reference key="1">
    <citation type="journal article" date="1993" name="Mol. Microbiol.">
        <title>DNA sequence, structure and gene expression of mycobacteriophage L5: a phage system for mycobacterial genetics.</title>
        <authorList>
            <person name="Hatfull G.F."/>
            <person name="Sarkis G.J."/>
        </authorList>
    </citation>
    <scope>NUCLEOTIDE SEQUENCE [LARGE SCALE GENOMIC DNA]</scope>
</reference>
<proteinExistence type="predicted"/>
<protein>
    <recommendedName>
        <fullName>Gene 64 protein</fullName>
    </recommendedName>
    <alternativeName>
        <fullName>Gp64</fullName>
    </alternativeName>
</protein>
<organismHost>
    <name type="scientific">Mycobacterium</name>
    <dbReference type="NCBI Taxonomy" id="1763"/>
</organismHost>
<sequence>MKKIIATALIAGSAILGLSACTSDADVASENVSKAADNFEINRRIVFFNGITDKYLLEIQGRCSINADTASKKLDVTCKTKDGIKKHFLGLSDNVSYFMEQVDGANVSTDFYQVNFKPQAILPDIELR</sequence>